<gene>
    <name evidence="6" type="primary">APY</name>
    <name evidence="7" type="synonym">M39</name>
</gene>
<evidence type="ECO:0000255" key="1">
    <source>
        <dbReference type="PROSITE-ProRule" id="PRU00498"/>
    </source>
</evidence>
<evidence type="ECO:0000269" key="2">
    <source>
    </source>
</evidence>
<evidence type="ECO:0000269" key="3">
    <source>
    </source>
</evidence>
<evidence type="ECO:0000303" key="4">
    <source>
    </source>
</evidence>
<evidence type="ECO:0000303" key="5">
    <source>
    </source>
</evidence>
<evidence type="ECO:0000305" key="6"/>
<evidence type="ECO:0000312" key="7">
    <source>
        <dbReference type="EMBL" id="ABI20147.1"/>
    </source>
</evidence>
<reference evidence="7" key="1">
    <citation type="journal article" date="2006" name="BMC Genomics">
        <title>High degree of conservancy among secreted salivary gland proteins from two geographically distant Phlebotomus duboscqi sandflies populations (Mali and Kenya).</title>
        <authorList>
            <person name="Kato H."/>
            <person name="Anderson J.M."/>
            <person name="Kamhawi S."/>
            <person name="Oliveira F."/>
            <person name="Lawyer P.G."/>
            <person name="Pham V.M."/>
            <person name="Sangare C.S."/>
            <person name="Samake S."/>
            <person name="Sissoko I."/>
            <person name="Garfield M."/>
            <person name="Sigutova L."/>
            <person name="Volf P."/>
            <person name="Doumbia S."/>
            <person name="Valenzuela J.G."/>
        </authorList>
    </citation>
    <scope>NUCLEOTIDE SEQUENCE [LARGE SCALE MRNA]</scope>
    <scope>PROTEIN SEQUENCE OF 22-41</scope>
    <scope>TISSUE SPECIFICITY</scope>
</reference>
<reference evidence="6" key="2">
    <citation type="journal article" date="2009" name="J. Insect Physiol.">
        <title>Functional characterization of a salivary apyrase from the sand fly, Phlebotomus duboscqi, a vector of Leishmania major.</title>
        <authorList>
            <person name="Hamasaki R."/>
            <person name="Kato H."/>
            <person name="Terayama Y."/>
            <person name="Iwata H."/>
            <person name="Valenzuela J.G."/>
        </authorList>
    </citation>
    <scope>FUNCTION</scope>
    <scope>CATALYTIC ACTIVITY</scope>
    <scope>COFACTOR</scope>
</reference>
<organism evidence="7">
    <name type="scientific">Phlebotomus duboscqi</name>
    <name type="common">Sandfly</name>
    <dbReference type="NCBI Taxonomy" id="37738"/>
    <lineage>
        <taxon>Eukaryota</taxon>
        <taxon>Metazoa</taxon>
        <taxon>Ecdysozoa</taxon>
        <taxon>Arthropoda</taxon>
        <taxon>Hexapoda</taxon>
        <taxon>Insecta</taxon>
        <taxon>Pterygota</taxon>
        <taxon>Neoptera</taxon>
        <taxon>Endopterygota</taxon>
        <taxon>Diptera</taxon>
        <taxon>Nematocera</taxon>
        <taxon>Psychodoidea</taxon>
        <taxon>Psychodidae</taxon>
        <taxon>Phlebotomus</taxon>
        <taxon>Phlebotomus</taxon>
    </lineage>
</organism>
<proteinExistence type="evidence at protein level"/>
<dbReference type="EC" id="3.6.1.5" evidence="3"/>
<dbReference type="EMBL" id="DQ834331">
    <property type="protein sequence ID" value="ABI20147.1"/>
    <property type="molecule type" value="mRNA"/>
</dbReference>
<dbReference type="SMR" id="Q06K77"/>
<dbReference type="BRENDA" id="3.6.1.5">
    <property type="organism ID" value="12494"/>
</dbReference>
<dbReference type="GO" id="GO:0005576">
    <property type="term" value="C:extracellular region"/>
    <property type="evidence" value="ECO:0007669"/>
    <property type="project" value="UniProtKB-SubCell"/>
</dbReference>
<dbReference type="GO" id="GO:0005524">
    <property type="term" value="F:ATP binding"/>
    <property type="evidence" value="ECO:0007669"/>
    <property type="project" value="UniProtKB-KW"/>
</dbReference>
<dbReference type="GO" id="GO:0005509">
    <property type="term" value="F:calcium ion binding"/>
    <property type="evidence" value="ECO:0007669"/>
    <property type="project" value="InterPro"/>
</dbReference>
<dbReference type="GO" id="GO:0004382">
    <property type="term" value="F:GDP phosphatase activity"/>
    <property type="evidence" value="ECO:0007669"/>
    <property type="project" value="TreeGrafter"/>
</dbReference>
<dbReference type="GO" id="GO:0090729">
    <property type="term" value="F:toxin activity"/>
    <property type="evidence" value="ECO:0007669"/>
    <property type="project" value="UniProtKB-KW"/>
</dbReference>
<dbReference type="GO" id="GO:0045134">
    <property type="term" value="F:UDP phosphatase activity"/>
    <property type="evidence" value="ECO:0007669"/>
    <property type="project" value="TreeGrafter"/>
</dbReference>
<dbReference type="GO" id="GO:0030166">
    <property type="term" value="P:proteoglycan biosynthetic process"/>
    <property type="evidence" value="ECO:0007669"/>
    <property type="project" value="TreeGrafter"/>
</dbReference>
<dbReference type="FunFam" id="2.120.10.100:FF:000001">
    <property type="entry name" value="Soluble calcium-activated nucleotidase 1"/>
    <property type="match status" value="1"/>
</dbReference>
<dbReference type="Gene3D" id="2.120.10.100">
    <property type="entry name" value="Apyrase"/>
    <property type="match status" value="1"/>
</dbReference>
<dbReference type="InterPro" id="IPR009283">
    <property type="entry name" value="Apyrase"/>
</dbReference>
<dbReference type="InterPro" id="IPR036258">
    <property type="entry name" value="Apyrase_sf"/>
</dbReference>
<dbReference type="PANTHER" id="PTHR13023">
    <property type="entry name" value="APYRASE"/>
    <property type="match status" value="1"/>
</dbReference>
<dbReference type="PANTHER" id="PTHR13023:SF3">
    <property type="entry name" value="SOLUBLE CALCIUM-ACTIVATED NUCLEOTIDASE 1"/>
    <property type="match status" value="1"/>
</dbReference>
<dbReference type="Pfam" id="PF06079">
    <property type="entry name" value="Apyrase"/>
    <property type="match status" value="1"/>
</dbReference>
<dbReference type="SUPFAM" id="SSF101887">
    <property type="entry name" value="Apyrase"/>
    <property type="match status" value="1"/>
</dbReference>
<accession>Q06K77</accession>
<keyword id="KW-0067">ATP-binding</keyword>
<keyword id="KW-0106">Calcium</keyword>
<keyword id="KW-0903">Direct protein sequencing</keyword>
<keyword id="KW-0325">Glycoprotein</keyword>
<keyword id="KW-1199">Hemostasis impairing toxin</keyword>
<keyword id="KW-0378">Hydrolase</keyword>
<keyword id="KW-0479">Metal-binding</keyword>
<keyword id="KW-0547">Nucleotide-binding</keyword>
<keyword id="KW-1201">Platelet aggregation inhibiting toxin</keyword>
<keyword id="KW-0964">Secreted</keyword>
<keyword id="KW-0732">Signal</keyword>
<keyword id="KW-0800">Toxin</keyword>
<comment type="function">
    <text evidence="3">Facilitates hematophagy by inhibiting ADP- and collagen-dependent platelet aggregation in the host (PubMed:19651132). Cleaves adenosine triphosphate (ATP) and adenosine diphosphate (ADP) to adenosine monophosphate (AMP) and inorganic phosphate in calcium-dependent manner (PubMed:19651132).</text>
</comment>
<comment type="catalytic activity">
    <reaction evidence="3">
        <text>a ribonucleoside 5'-triphosphate + 2 H2O = a ribonucleoside 5'-phosphate + 2 phosphate + 2 H(+)</text>
        <dbReference type="Rhea" id="RHEA:36795"/>
        <dbReference type="ChEBI" id="CHEBI:15377"/>
        <dbReference type="ChEBI" id="CHEBI:15378"/>
        <dbReference type="ChEBI" id="CHEBI:43474"/>
        <dbReference type="ChEBI" id="CHEBI:58043"/>
        <dbReference type="ChEBI" id="CHEBI:61557"/>
        <dbReference type="EC" id="3.6.1.5"/>
    </reaction>
    <physiologicalReaction direction="left-to-right" evidence="6">
        <dbReference type="Rhea" id="RHEA:36796"/>
    </physiologicalReaction>
</comment>
<comment type="cofactor">
    <cofactor evidence="3">
        <name>Ca(2+)</name>
        <dbReference type="ChEBI" id="CHEBI:29108"/>
    </cofactor>
</comment>
<comment type="subcellular location">
    <subcellularLocation>
        <location evidence="6">Secreted</location>
    </subcellularLocation>
</comment>
<comment type="tissue specificity">
    <text evidence="2">Salivary gland (at protein level).</text>
</comment>
<comment type="similarity">
    <text evidence="6">Belongs to the apyrase family.</text>
</comment>
<protein>
    <recommendedName>
        <fullName evidence="4">Apyrase</fullName>
        <shortName evidence="5">PduApy</shortName>
        <ecNumber evidence="3">3.6.1.5</ecNumber>
    </recommendedName>
    <alternativeName>
        <fullName evidence="7">35.8 kDa salivary protein</fullName>
    </alternativeName>
</protein>
<feature type="signal peptide" evidence="2">
    <location>
        <begin position="1"/>
        <end position="21"/>
    </location>
</feature>
<feature type="chain" id="PRO_5004165424" description="Apyrase" evidence="6">
    <location>
        <begin position="22"/>
        <end position="336"/>
    </location>
</feature>
<feature type="glycosylation site" description="N-linked (GlcNAc...) asparagine" evidence="1">
    <location>
        <position position="209"/>
    </location>
</feature>
<name>APY_PHLDU</name>
<sequence length="336" mass="38050">MFLKFCVVAFAICLSINLSEGAPSSETIYKFAIIADLDRKSISQKNDNNYKSIVKIGQLNQVGRKFNFAMENKDHEIFTKYAYKGRGAELSEFLVYKWKLYTFDDKSGIVFKLKNNADLVPWVILANGNGDQVDGFKAEWATTKGDKMYVGSTGISWSDSTGKLNSNSLWIKEINQDGKVLSSNWKEYYDKMKSAMNMPKGFIWHEAVNWSKKKNQWVLLPRKCSELPFDTETEETIGCNKIIIASENFQKINSIDIKGTPFDPAAGFSSFKFLPDSDDQILIALKTIEKNGKTATYLTVIDITGKVLMSDKIVNKDKFEGIVLLKSTEGFLKRKE</sequence>